<gene>
    <name evidence="1" type="primary">mnmE</name>
    <name evidence="1" type="synonym">trmE</name>
    <name type="ordered locus">DVU_1079</name>
</gene>
<feature type="chain" id="PRO_0000345774" description="tRNA modification GTPase MnmE">
    <location>
        <begin position="1"/>
        <end position="457"/>
    </location>
</feature>
<feature type="domain" description="TrmE-type G">
    <location>
        <begin position="220"/>
        <end position="376"/>
    </location>
</feature>
<feature type="binding site" evidence="1">
    <location>
        <position position="23"/>
    </location>
    <ligand>
        <name>(6S)-5-formyl-5,6,7,8-tetrahydrofolate</name>
        <dbReference type="ChEBI" id="CHEBI:57457"/>
    </ligand>
</feature>
<feature type="binding site" evidence="1">
    <location>
        <position position="85"/>
    </location>
    <ligand>
        <name>(6S)-5-formyl-5,6,7,8-tetrahydrofolate</name>
        <dbReference type="ChEBI" id="CHEBI:57457"/>
    </ligand>
</feature>
<feature type="binding site" evidence="1">
    <location>
        <position position="124"/>
    </location>
    <ligand>
        <name>(6S)-5-formyl-5,6,7,8-tetrahydrofolate</name>
        <dbReference type="ChEBI" id="CHEBI:57457"/>
    </ligand>
</feature>
<feature type="binding site" evidence="1">
    <location>
        <begin position="230"/>
        <end position="235"/>
    </location>
    <ligand>
        <name>GTP</name>
        <dbReference type="ChEBI" id="CHEBI:37565"/>
    </ligand>
</feature>
<feature type="binding site" evidence="1">
    <location>
        <position position="230"/>
    </location>
    <ligand>
        <name>K(+)</name>
        <dbReference type="ChEBI" id="CHEBI:29103"/>
    </ligand>
</feature>
<feature type="binding site" evidence="1">
    <location>
        <position position="234"/>
    </location>
    <ligand>
        <name>Mg(2+)</name>
        <dbReference type="ChEBI" id="CHEBI:18420"/>
    </ligand>
</feature>
<feature type="binding site" evidence="1">
    <location>
        <begin position="249"/>
        <end position="255"/>
    </location>
    <ligand>
        <name>GTP</name>
        <dbReference type="ChEBI" id="CHEBI:37565"/>
    </ligand>
</feature>
<feature type="binding site" evidence="1">
    <location>
        <position position="249"/>
    </location>
    <ligand>
        <name>K(+)</name>
        <dbReference type="ChEBI" id="CHEBI:29103"/>
    </ligand>
</feature>
<feature type="binding site" evidence="1">
    <location>
        <position position="251"/>
    </location>
    <ligand>
        <name>K(+)</name>
        <dbReference type="ChEBI" id="CHEBI:29103"/>
    </ligand>
</feature>
<feature type="binding site" evidence="1">
    <location>
        <position position="254"/>
    </location>
    <ligand>
        <name>K(+)</name>
        <dbReference type="ChEBI" id="CHEBI:29103"/>
    </ligand>
</feature>
<feature type="binding site" evidence="1">
    <location>
        <position position="255"/>
    </location>
    <ligand>
        <name>Mg(2+)</name>
        <dbReference type="ChEBI" id="CHEBI:18420"/>
    </ligand>
</feature>
<feature type="binding site" evidence="1">
    <location>
        <begin position="274"/>
        <end position="277"/>
    </location>
    <ligand>
        <name>GTP</name>
        <dbReference type="ChEBI" id="CHEBI:37565"/>
    </ligand>
</feature>
<feature type="binding site" evidence="1">
    <location>
        <position position="457"/>
    </location>
    <ligand>
        <name>(6S)-5-formyl-5,6,7,8-tetrahydrofolate</name>
        <dbReference type="ChEBI" id="CHEBI:57457"/>
    </ligand>
</feature>
<reference key="1">
    <citation type="journal article" date="2004" name="Nat. Biotechnol.">
        <title>The genome sequence of the anaerobic, sulfate-reducing bacterium Desulfovibrio vulgaris Hildenborough.</title>
        <authorList>
            <person name="Heidelberg J.F."/>
            <person name="Seshadri R."/>
            <person name="Haveman S.A."/>
            <person name="Hemme C.L."/>
            <person name="Paulsen I.T."/>
            <person name="Kolonay J.F."/>
            <person name="Eisen J.A."/>
            <person name="Ward N.L."/>
            <person name="Methe B.A."/>
            <person name="Brinkac L.M."/>
            <person name="Daugherty S.C."/>
            <person name="DeBoy R.T."/>
            <person name="Dodson R.J."/>
            <person name="Durkin A.S."/>
            <person name="Madupu R."/>
            <person name="Nelson W.C."/>
            <person name="Sullivan S.A."/>
            <person name="Fouts D.E."/>
            <person name="Haft D.H."/>
            <person name="Selengut J."/>
            <person name="Peterson J.D."/>
            <person name="Davidsen T.M."/>
            <person name="Zafar N."/>
            <person name="Zhou L."/>
            <person name="Radune D."/>
            <person name="Dimitrov G."/>
            <person name="Hance M."/>
            <person name="Tran K."/>
            <person name="Khouri H.M."/>
            <person name="Gill J."/>
            <person name="Utterback T.R."/>
            <person name="Feldblyum T.V."/>
            <person name="Wall J.D."/>
            <person name="Voordouw G."/>
            <person name="Fraser C.M."/>
        </authorList>
    </citation>
    <scope>NUCLEOTIDE SEQUENCE [LARGE SCALE GENOMIC DNA]</scope>
    <source>
        <strain>ATCC 29579 / DSM 644 / CCUG 34227 / NCIMB 8303 / VKM B-1760 / Hildenborough</strain>
    </source>
</reference>
<name>MNME_NITV2</name>
<accession>Q72D51</accession>
<protein>
    <recommendedName>
        <fullName evidence="1">tRNA modification GTPase MnmE</fullName>
        <ecNumber evidence="1">3.6.-.-</ecNumber>
    </recommendedName>
</protein>
<comment type="function">
    <text evidence="1">Exhibits a very high intrinsic GTPase hydrolysis rate. Involved in the addition of a carboxymethylaminomethyl (cmnm) group at the wobble position (U34) of certain tRNAs, forming tRNA-cmnm(5)s(2)U34.</text>
</comment>
<comment type="cofactor">
    <cofactor evidence="1">
        <name>K(+)</name>
        <dbReference type="ChEBI" id="CHEBI:29103"/>
    </cofactor>
    <text evidence="1">Binds 1 potassium ion per subunit.</text>
</comment>
<comment type="subunit">
    <text evidence="1">Homodimer. Heterotetramer of two MnmE and two MnmG subunits.</text>
</comment>
<comment type="subcellular location">
    <subcellularLocation>
        <location evidence="1">Cytoplasm</location>
    </subcellularLocation>
</comment>
<comment type="similarity">
    <text evidence="1">Belongs to the TRAFAC class TrmE-Era-EngA-EngB-Septin-like GTPase superfamily. TrmE GTPase family.</text>
</comment>
<proteinExistence type="inferred from homology"/>
<evidence type="ECO:0000255" key="1">
    <source>
        <dbReference type="HAMAP-Rule" id="MF_00379"/>
    </source>
</evidence>
<sequence length="457" mass="48265">MQHDDTIAAIATPLGQGGIGIIRISGPASLEVLRALFRPSSSRFGGFRPWTLHHGTITDGCDPLDDVLAVHMPGPRTFTGEDVSEIHCHGGSGVLAAVLEACVRHGARYAERGEFTRRAFLNGRMDLTQAEAVAEMIAAPSREGMRLAQAKLDGLLGQRVGALRARLDALRMQLCVAVDFPEEEVECLAPEAFLAEIEAVRQGVVELSAGYARTRCWQDGALVVLAGQVNAGKSSLMNALLGRRRAIVTDLPGTTRDFIEEPLNLSGLAIRLADTAGLRETGDIVEQEGVRMSRDLVAQADLVLLVTDATQGLQGPELELLRHAGPERVLVVFNKTDLLEGRILPSTPEGCRSVHVAAASGDGVESLVTAIRAAVLAATGAGEPEAGELAPNMRQAAALDKAATILDELAGDIRAHVPYDLCGVRLDGACAALMDVTGQSTPEAILDAIFASFCIGK</sequence>
<dbReference type="EC" id="3.6.-.-" evidence="1"/>
<dbReference type="EMBL" id="AE017285">
    <property type="protein sequence ID" value="AAS95559.1"/>
    <property type="molecule type" value="Genomic_DNA"/>
</dbReference>
<dbReference type="RefSeq" id="WP_010938378.1">
    <property type="nucleotide sequence ID" value="NC_002937.3"/>
</dbReference>
<dbReference type="RefSeq" id="YP_010300.1">
    <property type="nucleotide sequence ID" value="NC_002937.3"/>
</dbReference>
<dbReference type="SMR" id="Q72D51"/>
<dbReference type="STRING" id="882.DVU_1079"/>
<dbReference type="PaxDb" id="882-DVU_1079"/>
<dbReference type="EnsemblBacteria" id="AAS95559">
    <property type="protein sequence ID" value="AAS95559"/>
    <property type="gene ID" value="DVU_1079"/>
</dbReference>
<dbReference type="KEGG" id="dvu:DVU_1079"/>
<dbReference type="PATRIC" id="fig|882.5.peg.1017"/>
<dbReference type="eggNOG" id="COG0486">
    <property type="taxonomic scope" value="Bacteria"/>
</dbReference>
<dbReference type="HOGENOM" id="CLU_019624_4_1_7"/>
<dbReference type="OrthoDB" id="9805918at2"/>
<dbReference type="PhylomeDB" id="Q72D51"/>
<dbReference type="Proteomes" id="UP000002194">
    <property type="component" value="Chromosome"/>
</dbReference>
<dbReference type="GO" id="GO:0005829">
    <property type="term" value="C:cytosol"/>
    <property type="evidence" value="ECO:0007669"/>
    <property type="project" value="TreeGrafter"/>
</dbReference>
<dbReference type="GO" id="GO:0005525">
    <property type="term" value="F:GTP binding"/>
    <property type="evidence" value="ECO:0007669"/>
    <property type="project" value="UniProtKB-UniRule"/>
</dbReference>
<dbReference type="GO" id="GO:0003924">
    <property type="term" value="F:GTPase activity"/>
    <property type="evidence" value="ECO:0007669"/>
    <property type="project" value="UniProtKB-UniRule"/>
</dbReference>
<dbReference type="GO" id="GO:0046872">
    <property type="term" value="F:metal ion binding"/>
    <property type="evidence" value="ECO:0007669"/>
    <property type="project" value="UniProtKB-KW"/>
</dbReference>
<dbReference type="GO" id="GO:0030488">
    <property type="term" value="P:tRNA methylation"/>
    <property type="evidence" value="ECO:0007669"/>
    <property type="project" value="TreeGrafter"/>
</dbReference>
<dbReference type="GO" id="GO:0002098">
    <property type="term" value="P:tRNA wobble uridine modification"/>
    <property type="evidence" value="ECO:0007669"/>
    <property type="project" value="TreeGrafter"/>
</dbReference>
<dbReference type="CDD" id="cd04164">
    <property type="entry name" value="trmE"/>
    <property type="match status" value="1"/>
</dbReference>
<dbReference type="CDD" id="cd14858">
    <property type="entry name" value="TrmE_N"/>
    <property type="match status" value="1"/>
</dbReference>
<dbReference type="Gene3D" id="3.40.50.300">
    <property type="entry name" value="P-loop containing nucleotide triphosphate hydrolases"/>
    <property type="match status" value="1"/>
</dbReference>
<dbReference type="Gene3D" id="3.30.1360.120">
    <property type="entry name" value="Probable tRNA modification gtpase trme, domain 1"/>
    <property type="match status" value="1"/>
</dbReference>
<dbReference type="Gene3D" id="1.20.120.430">
    <property type="entry name" value="tRNA modification GTPase MnmE domain 2"/>
    <property type="match status" value="1"/>
</dbReference>
<dbReference type="HAMAP" id="MF_00379">
    <property type="entry name" value="GTPase_MnmE"/>
    <property type="match status" value="1"/>
</dbReference>
<dbReference type="InterPro" id="IPR031168">
    <property type="entry name" value="G_TrmE"/>
</dbReference>
<dbReference type="InterPro" id="IPR006073">
    <property type="entry name" value="GTP-bd"/>
</dbReference>
<dbReference type="InterPro" id="IPR018948">
    <property type="entry name" value="GTP-bd_TrmE_N"/>
</dbReference>
<dbReference type="InterPro" id="IPR004520">
    <property type="entry name" value="GTPase_MnmE"/>
</dbReference>
<dbReference type="InterPro" id="IPR027368">
    <property type="entry name" value="MnmE_dom2"/>
</dbReference>
<dbReference type="InterPro" id="IPR025867">
    <property type="entry name" value="MnmE_helical"/>
</dbReference>
<dbReference type="InterPro" id="IPR027417">
    <property type="entry name" value="P-loop_NTPase"/>
</dbReference>
<dbReference type="InterPro" id="IPR005225">
    <property type="entry name" value="Small_GTP-bd"/>
</dbReference>
<dbReference type="InterPro" id="IPR027266">
    <property type="entry name" value="TrmE/GcvT_dom1"/>
</dbReference>
<dbReference type="NCBIfam" id="TIGR00450">
    <property type="entry name" value="mnmE_trmE_thdF"/>
    <property type="match status" value="1"/>
</dbReference>
<dbReference type="NCBIfam" id="TIGR00231">
    <property type="entry name" value="small_GTP"/>
    <property type="match status" value="1"/>
</dbReference>
<dbReference type="PANTHER" id="PTHR42714">
    <property type="entry name" value="TRNA MODIFICATION GTPASE GTPBP3"/>
    <property type="match status" value="1"/>
</dbReference>
<dbReference type="PANTHER" id="PTHR42714:SF2">
    <property type="entry name" value="TRNA MODIFICATION GTPASE GTPBP3, MITOCHONDRIAL"/>
    <property type="match status" value="1"/>
</dbReference>
<dbReference type="Pfam" id="PF01926">
    <property type="entry name" value="MMR_HSR1"/>
    <property type="match status" value="1"/>
</dbReference>
<dbReference type="Pfam" id="PF12631">
    <property type="entry name" value="MnmE_helical"/>
    <property type="match status" value="1"/>
</dbReference>
<dbReference type="Pfam" id="PF10396">
    <property type="entry name" value="TrmE_N"/>
    <property type="match status" value="1"/>
</dbReference>
<dbReference type="SUPFAM" id="SSF52540">
    <property type="entry name" value="P-loop containing nucleoside triphosphate hydrolases"/>
    <property type="match status" value="1"/>
</dbReference>
<dbReference type="PROSITE" id="PS51709">
    <property type="entry name" value="G_TRME"/>
    <property type="match status" value="1"/>
</dbReference>
<organism>
    <name type="scientific">Nitratidesulfovibrio vulgaris (strain ATCC 29579 / DSM 644 / CCUG 34227 / NCIMB 8303 / VKM B-1760 / Hildenborough)</name>
    <name type="common">Desulfovibrio vulgaris</name>
    <dbReference type="NCBI Taxonomy" id="882"/>
    <lineage>
        <taxon>Bacteria</taxon>
        <taxon>Pseudomonadati</taxon>
        <taxon>Thermodesulfobacteriota</taxon>
        <taxon>Desulfovibrionia</taxon>
        <taxon>Desulfovibrionales</taxon>
        <taxon>Desulfovibrionaceae</taxon>
        <taxon>Nitratidesulfovibrio</taxon>
    </lineage>
</organism>
<keyword id="KW-0963">Cytoplasm</keyword>
<keyword id="KW-0342">GTP-binding</keyword>
<keyword id="KW-0378">Hydrolase</keyword>
<keyword id="KW-0460">Magnesium</keyword>
<keyword id="KW-0479">Metal-binding</keyword>
<keyword id="KW-0547">Nucleotide-binding</keyword>
<keyword id="KW-0630">Potassium</keyword>
<keyword id="KW-1185">Reference proteome</keyword>
<keyword id="KW-0819">tRNA processing</keyword>